<sequence length="483" mass="55907">MLTLDTLNVMLAVSEEGLIEEMIIALLASPQLAVFFEKFPRLKAAITDDVPRWREALRSRLKDARVPPELTEEVMCYQQSQLLSTPQFIVQLPQILDLLHRLNSPWAEQARQLVDANSTITSALHTLFLQRWRLSLIVQATTLNQQLLEEEREQLLSEVQERMTLSGQLEPILADNNTAAGRLWDMSAGQLKRGDYQLIVKYGEFLNEQPELKRLAEQLGRSREAKSIPRNDAQMETFRTMVREPATVPEQVDGLQQSDDILRLLPPELATLGITELEYEFYRRLVEKQLLTYRLHGESWREKVIERPVVHKDYDEQPRGPFIVCVDTSGSMGGFNEQCAKAFCLALMRIALAENRRCYIMLFSTEIVRYELSGPQGIEQAIRFLSQQFRGGTDLASCFRAIMERLQSREWFDADAVVISDFIAQRLPDDVTSKVKELQRVHQHRFHAVAMSAHGKPGIMRIFDHIWRFDTGMRSRLLRRWRR</sequence>
<gene>
    <name evidence="1" type="primary">viaA</name>
    <name type="ordered locus">SSON_3874</name>
</gene>
<protein>
    <recommendedName>
        <fullName evidence="1">Regulatory protein ViaA</fullName>
    </recommendedName>
    <alternativeName>
        <fullName evidence="1">VWA interacting with AAA+ ATPase</fullName>
    </alternativeName>
</protein>
<evidence type="ECO:0000255" key="1">
    <source>
        <dbReference type="HAMAP-Rule" id="MF_01626"/>
    </source>
</evidence>
<keyword id="KW-0143">Chaperone</keyword>
<keyword id="KW-0963">Cytoplasm</keyword>
<keyword id="KW-1185">Reference proteome</keyword>
<dbReference type="EMBL" id="CP000038">
    <property type="protein sequence ID" value="AAZ90413.1"/>
    <property type="molecule type" value="Genomic_DNA"/>
</dbReference>
<dbReference type="RefSeq" id="WP_000956642.1">
    <property type="nucleotide sequence ID" value="NC_007384.1"/>
</dbReference>
<dbReference type="SMR" id="Q3YVP9"/>
<dbReference type="GeneID" id="93778222"/>
<dbReference type="KEGG" id="ssn:SSON_3874"/>
<dbReference type="HOGENOM" id="CLU_022130_0_0_6"/>
<dbReference type="Proteomes" id="UP000002529">
    <property type="component" value="Chromosome"/>
</dbReference>
<dbReference type="GO" id="GO:0005829">
    <property type="term" value="C:cytosol"/>
    <property type="evidence" value="ECO:0007669"/>
    <property type="project" value="TreeGrafter"/>
</dbReference>
<dbReference type="CDD" id="cd01462">
    <property type="entry name" value="VWA_YIEM_type"/>
    <property type="match status" value="1"/>
</dbReference>
<dbReference type="Gene3D" id="3.40.50.410">
    <property type="entry name" value="von Willebrand factor, type A domain"/>
    <property type="match status" value="1"/>
</dbReference>
<dbReference type="HAMAP" id="MF_01626">
    <property type="entry name" value="ViaA"/>
    <property type="match status" value="1"/>
</dbReference>
<dbReference type="InterPro" id="IPR008912">
    <property type="entry name" value="Uncharacterised_CoxE"/>
</dbReference>
<dbReference type="InterPro" id="IPR023481">
    <property type="entry name" value="Uncharacterised_ViaA"/>
</dbReference>
<dbReference type="InterPro" id="IPR002035">
    <property type="entry name" value="VWF_A"/>
</dbReference>
<dbReference type="InterPro" id="IPR036465">
    <property type="entry name" value="vWFA_dom_sf"/>
</dbReference>
<dbReference type="NCBIfam" id="NF008230">
    <property type="entry name" value="PRK10997.1"/>
    <property type="match status" value="1"/>
</dbReference>
<dbReference type="PANTHER" id="PTHR36846">
    <property type="entry name" value="PROTEIN VIAA"/>
    <property type="match status" value="1"/>
</dbReference>
<dbReference type="PANTHER" id="PTHR36846:SF1">
    <property type="entry name" value="PROTEIN VIAA"/>
    <property type="match status" value="1"/>
</dbReference>
<dbReference type="Pfam" id="PF05762">
    <property type="entry name" value="VWA_CoxE"/>
    <property type="match status" value="1"/>
</dbReference>
<dbReference type="SMART" id="SM00327">
    <property type="entry name" value="VWA"/>
    <property type="match status" value="1"/>
</dbReference>
<dbReference type="SUPFAM" id="SSF53300">
    <property type="entry name" value="vWA-like"/>
    <property type="match status" value="1"/>
</dbReference>
<proteinExistence type="inferred from homology"/>
<name>VIAA_SHISS</name>
<organism>
    <name type="scientific">Shigella sonnei (strain Ss046)</name>
    <dbReference type="NCBI Taxonomy" id="300269"/>
    <lineage>
        <taxon>Bacteria</taxon>
        <taxon>Pseudomonadati</taxon>
        <taxon>Pseudomonadota</taxon>
        <taxon>Gammaproteobacteria</taxon>
        <taxon>Enterobacterales</taxon>
        <taxon>Enterobacteriaceae</taxon>
        <taxon>Shigella</taxon>
    </lineage>
</organism>
<comment type="function">
    <text evidence="1">Component of the RavA-ViaA chaperone complex, which may act on the membrane to optimize the function of some of the respiratory chains. ViaA stimulates the ATPase activity of RavA.</text>
</comment>
<comment type="subunit">
    <text evidence="1">Homodimer. Interacts with RavA.</text>
</comment>
<comment type="subcellular location">
    <subcellularLocation>
        <location evidence="1">Cytoplasm</location>
    </subcellularLocation>
</comment>
<comment type="similarity">
    <text evidence="1">Belongs to the ViaA family.</text>
</comment>
<reference key="1">
    <citation type="journal article" date="2005" name="Nucleic Acids Res.">
        <title>Genome dynamics and diversity of Shigella species, the etiologic agents of bacillary dysentery.</title>
        <authorList>
            <person name="Yang F."/>
            <person name="Yang J."/>
            <person name="Zhang X."/>
            <person name="Chen L."/>
            <person name="Jiang Y."/>
            <person name="Yan Y."/>
            <person name="Tang X."/>
            <person name="Wang J."/>
            <person name="Xiong Z."/>
            <person name="Dong J."/>
            <person name="Xue Y."/>
            <person name="Zhu Y."/>
            <person name="Xu X."/>
            <person name="Sun L."/>
            <person name="Chen S."/>
            <person name="Nie H."/>
            <person name="Peng J."/>
            <person name="Xu J."/>
            <person name="Wang Y."/>
            <person name="Yuan Z."/>
            <person name="Wen Y."/>
            <person name="Yao Z."/>
            <person name="Shen Y."/>
            <person name="Qiang B."/>
            <person name="Hou Y."/>
            <person name="Yu J."/>
            <person name="Jin Q."/>
        </authorList>
    </citation>
    <scope>NUCLEOTIDE SEQUENCE [LARGE SCALE GENOMIC DNA]</scope>
    <source>
        <strain>Ss046</strain>
    </source>
</reference>
<feature type="chain" id="PRO_0000196593" description="Regulatory protein ViaA">
    <location>
        <begin position="1"/>
        <end position="483"/>
    </location>
</feature>
<accession>Q3YVP9</accession>